<feature type="transit peptide" description="Mitochondrion" evidence="1">
    <location>
        <begin position="1"/>
        <end status="unknown"/>
    </location>
</feature>
<feature type="chain" id="PRO_0000020358" description="Mitochondrial inner membrane protein oxa1-1">
    <location>
        <begin status="unknown"/>
        <end position="374"/>
    </location>
</feature>
<feature type="topological domain" description="Mitochondrial matrix" evidence="1">
    <location>
        <begin status="unknown"/>
        <end position="76"/>
    </location>
</feature>
<feature type="transmembrane region" description="Helical" evidence="1">
    <location>
        <begin position="77"/>
        <end position="97"/>
    </location>
</feature>
<feature type="topological domain" description="Mitochondrial intermembrane" evidence="1">
    <location>
        <begin position="98"/>
        <end position="159"/>
    </location>
</feature>
<feature type="transmembrane region" description="Helical" evidence="1">
    <location>
        <begin position="160"/>
        <end position="180"/>
    </location>
</feature>
<feature type="topological domain" description="Mitochondrial matrix" evidence="1">
    <location>
        <begin position="181"/>
        <end position="242"/>
    </location>
</feature>
<feature type="transmembrane region" description="Helical" evidence="1">
    <location>
        <begin position="243"/>
        <end position="263"/>
    </location>
</feature>
<feature type="topological domain" description="Mitochondrial intermembrane" evidence="1">
    <location>
        <begin position="264"/>
        <end position="374"/>
    </location>
</feature>
<gene>
    <name type="primary">oxa101</name>
    <name type="synonym">oxa1-1</name>
    <name type="ORF">SPAC9G1.04</name>
</gene>
<name>OXA11_SCHPO</name>
<proteinExistence type="evidence at transcript level"/>
<comment type="function">
    <text evidence="2">Required for the insertion of integral membrane proteins into the mitochondrial inner membrane. Essential for the activity and assembly of cytochrome c oxidase. Not essential for viability, while oxa102 is essential. When both genes are deleted the cell is non-viable, suggesting that oxa101 act as a back-up for oxa102.</text>
</comment>
<comment type="subcellular location">
    <subcellularLocation>
        <location evidence="3">Mitochondrion inner membrane</location>
        <topology evidence="3">Multi-pass membrane protein</topology>
    </subcellularLocation>
</comment>
<comment type="similarity">
    <text evidence="3">Belongs to the OXA1/ALB3/YidC family.</text>
</comment>
<accession>O14300</accession>
<protein>
    <recommendedName>
        <fullName>Mitochondrial inner membrane protein oxa1-1</fullName>
    </recommendedName>
    <alternativeName>
        <fullName>Cytochrome oxidase biogenesis protein 1-1</fullName>
        <shortName>Sp1</shortName>
    </alternativeName>
</protein>
<keyword id="KW-0472">Membrane</keyword>
<keyword id="KW-0496">Mitochondrion</keyword>
<keyword id="KW-0999">Mitochondrion inner membrane</keyword>
<keyword id="KW-1185">Reference proteome</keyword>
<keyword id="KW-0809">Transit peptide</keyword>
<keyword id="KW-0812">Transmembrane</keyword>
<keyword id="KW-1133">Transmembrane helix</keyword>
<organism>
    <name type="scientific">Schizosaccharomyces pombe (strain 972 / ATCC 24843)</name>
    <name type="common">Fission yeast</name>
    <dbReference type="NCBI Taxonomy" id="284812"/>
    <lineage>
        <taxon>Eukaryota</taxon>
        <taxon>Fungi</taxon>
        <taxon>Dikarya</taxon>
        <taxon>Ascomycota</taxon>
        <taxon>Taphrinomycotina</taxon>
        <taxon>Schizosaccharomycetes</taxon>
        <taxon>Schizosaccharomycetales</taxon>
        <taxon>Schizosaccharomycetaceae</taxon>
        <taxon>Schizosaccharomyces</taxon>
    </lineage>
</organism>
<sequence length="374" mass="42060">MLHFLIRPSTRCAGSPHFNSTSSFLRKRLQSKTILSKRLGFQFRPSSTNVLAEVSTATSGFNPSWWPYALIQNTAYTINVYAGAPWWVSIILTTLGVRLALTPVMIASFRNSTKLSVIQPEMKKELEAIKTAKLDNDQLALNQHSIALRGIYLKHNVNPFAIFILPLTQSAVFFSFFYAIRKMSRLSVDGFTTGGLAWFKDLSIPDPYCILPIINAGLMFSGMQMNRANTASTIGNSTNWRTFFFLCCLLSPLLTAKLPAAIFMYWIPSSLFNIVQGYILKNPVVRSKLGFAPLPSIIEKQPSGFTLITNPIKSLKEFYKGVRDGFKTQYEQLQKDVSRRAVATTSASTIRPNSHYKKLKELNRSKKNSKKQSN</sequence>
<evidence type="ECO:0000255" key="1"/>
<evidence type="ECO:0000269" key="2">
    <source>
    </source>
</evidence>
<evidence type="ECO:0000305" key="3"/>
<reference key="1">
    <citation type="journal article" date="2000" name="Mol. Microbiol.">
        <title>The respiratory gene OXA1 has two fission yeast orthologues which together encode a function essential for cellular viability.</title>
        <authorList>
            <person name="Bonnefoy N."/>
            <person name="Kermorgant M."/>
            <person name="Groudinsky O."/>
            <person name="Dujardin G."/>
        </authorList>
    </citation>
    <scope>NUCLEOTIDE SEQUENCE [MRNA]</scope>
    <scope>FUNCTION</scope>
    <source>
        <strain>972 / ATCC 24843</strain>
    </source>
</reference>
<reference key="2">
    <citation type="journal article" date="2002" name="Nature">
        <title>The genome sequence of Schizosaccharomyces pombe.</title>
        <authorList>
            <person name="Wood V."/>
            <person name="Gwilliam R."/>
            <person name="Rajandream M.A."/>
            <person name="Lyne M.H."/>
            <person name="Lyne R."/>
            <person name="Stewart A."/>
            <person name="Sgouros J.G."/>
            <person name="Peat N."/>
            <person name="Hayles J."/>
            <person name="Baker S.G."/>
            <person name="Basham D."/>
            <person name="Bowman S."/>
            <person name="Brooks K."/>
            <person name="Brown D."/>
            <person name="Brown S."/>
            <person name="Chillingworth T."/>
            <person name="Churcher C.M."/>
            <person name="Collins M."/>
            <person name="Connor R."/>
            <person name="Cronin A."/>
            <person name="Davis P."/>
            <person name="Feltwell T."/>
            <person name="Fraser A."/>
            <person name="Gentles S."/>
            <person name="Goble A."/>
            <person name="Hamlin N."/>
            <person name="Harris D.E."/>
            <person name="Hidalgo J."/>
            <person name="Hodgson G."/>
            <person name="Holroyd S."/>
            <person name="Hornsby T."/>
            <person name="Howarth S."/>
            <person name="Huckle E.J."/>
            <person name="Hunt S."/>
            <person name="Jagels K."/>
            <person name="James K.D."/>
            <person name="Jones L."/>
            <person name="Jones M."/>
            <person name="Leather S."/>
            <person name="McDonald S."/>
            <person name="McLean J."/>
            <person name="Mooney P."/>
            <person name="Moule S."/>
            <person name="Mungall K.L."/>
            <person name="Murphy L.D."/>
            <person name="Niblett D."/>
            <person name="Odell C."/>
            <person name="Oliver K."/>
            <person name="O'Neil S."/>
            <person name="Pearson D."/>
            <person name="Quail M.A."/>
            <person name="Rabbinowitsch E."/>
            <person name="Rutherford K.M."/>
            <person name="Rutter S."/>
            <person name="Saunders D."/>
            <person name="Seeger K."/>
            <person name="Sharp S."/>
            <person name="Skelton J."/>
            <person name="Simmonds M.N."/>
            <person name="Squares R."/>
            <person name="Squares S."/>
            <person name="Stevens K."/>
            <person name="Taylor K."/>
            <person name="Taylor R.G."/>
            <person name="Tivey A."/>
            <person name="Walsh S.V."/>
            <person name="Warren T."/>
            <person name="Whitehead S."/>
            <person name="Woodward J.R."/>
            <person name="Volckaert G."/>
            <person name="Aert R."/>
            <person name="Robben J."/>
            <person name="Grymonprez B."/>
            <person name="Weltjens I."/>
            <person name="Vanstreels E."/>
            <person name="Rieger M."/>
            <person name="Schaefer M."/>
            <person name="Mueller-Auer S."/>
            <person name="Gabel C."/>
            <person name="Fuchs M."/>
            <person name="Duesterhoeft A."/>
            <person name="Fritzc C."/>
            <person name="Holzer E."/>
            <person name="Moestl D."/>
            <person name="Hilbert H."/>
            <person name="Borzym K."/>
            <person name="Langer I."/>
            <person name="Beck A."/>
            <person name="Lehrach H."/>
            <person name="Reinhardt R."/>
            <person name="Pohl T.M."/>
            <person name="Eger P."/>
            <person name="Zimmermann W."/>
            <person name="Wedler H."/>
            <person name="Wambutt R."/>
            <person name="Purnelle B."/>
            <person name="Goffeau A."/>
            <person name="Cadieu E."/>
            <person name="Dreano S."/>
            <person name="Gloux S."/>
            <person name="Lelaure V."/>
            <person name="Mottier S."/>
            <person name="Galibert F."/>
            <person name="Aves S.J."/>
            <person name="Xiang Z."/>
            <person name="Hunt C."/>
            <person name="Moore K."/>
            <person name="Hurst S.M."/>
            <person name="Lucas M."/>
            <person name="Rochet M."/>
            <person name="Gaillardin C."/>
            <person name="Tallada V.A."/>
            <person name="Garzon A."/>
            <person name="Thode G."/>
            <person name="Daga R.R."/>
            <person name="Cruzado L."/>
            <person name="Jimenez J."/>
            <person name="Sanchez M."/>
            <person name="del Rey F."/>
            <person name="Benito J."/>
            <person name="Dominguez A."/>
            <person name="Revuelta J.L."/>
            <person name="Moreno S."/>
            <person name="Armstrong J."/>
            <person name="Forsburg S.L."/>
            <person name="Cerutti L."/>
            <person name="Lowe T."/>
            <person name="McCombie W.R."/>
            <person name="Paulsen I."/>
            <person name="Potashkin J."/>
            <person name="Shpakovski G.V."/>
            <person name="Ussery D."/>
            <person name="Barrell B.G."/>
            <person name="Nurse P."/>
        </authorList>
    </citation>
    <scope>NUCLEOTIDE SEQUENCE [LARGE SCALE GENOMIC DNA]</scope>
    <source>
        <strain>972 / ATCC 24843</strain>
    </source>
</reference>
<dbReference type="EMBL" id="X94123">
    <property type="protein sequence ID" value="CAA63843.1"/>
    <property type="molecule type" value="mRNA"/>
</dbReference>
<dbReference type="EMBL" id="CU329670">
    <property type="protein sequence ID" value="CAB11488.1"/>
    <property type="molecule type" value="Genomic_DNA"/>
</dbReference>
<dbReference type="PIR" id="T43708">
    <property type="entry name" value="T43708"/>
</dbReference>
<dbReference type="RefSeq" id="NP_593559.1">
    <property type="nucleotide sequence ID" value="NM_001018992.2"/>
</dbReference>
<dbReference type="BioGRID" id="279321">
    <property type="interactions" value="3"/>
</dbReference>
<dbReference type="FunCoup" id="O14300">
    <property type="interactions" value="306"/>
</dbReference>
<dbReference type="STRING" id="284812.O14300"/>
<dbReference type="iPTMnet" id="O14300"/>
<dbReference type="SwissPalm" id="O14300"/>
<dbReference type="PaxDb" id="4896-SPAC9G1.04.1"/>
<dbReference type="EnsemblFungi" id="SPAC9G1.04.1">
    <property type="protein sequence ID" value="SPAC9G1.04.1:pep"/>
    <property type="gene ID" value="SPAC9G1.04"/>
</dbReference>
<dbReference type="GeneID" id="2542876"/>
<dbReference type="KEGG" id="spo:2542876"/>
<dbReference type="PomBase" id="SPAC9G1.04">
    <property type="gene designation" value="oxa101"/>
</dbReference>
<dbReference type="VEuPathDB" id="FungiDB:SPAC9G1.04"/>
<dbReference type="eggNOG" id="KOG1239">
    <property type="taxonomic scope" value="Eukaryota"/>
</dbReference>
<dbReference type="HOGENOM" id="CLU_029282_3_2_1"/>
<dbReference type="InParanoid" id="O14300"/>
<dbReference type="OMA" id="PWWVSII"/>
<dbReference type="PhylomeDB" id="O14300"/>
<dbReference type="PRO" id="PR:O14300"/>
<dbReference type="Proteomes" id="UP000002485">
    <property type="component" value="Chromosome I"/>
</dbReference>
<dbReference type="GO" id="GO:0005743">
    <property type="term" value="C:mitochondrial inner membrane"/>
    <property type="evidence" value="ECO:0000318"/>
    <property type="project" value="GO_Central"/>
</dbReference>
<dbReference type="GO" id="GO:0005739">
    <property type="term" value="C:mitochondrion"/>
    <property type="evidence" value="ECO:0007005"/>
    <property type="project" value="PomBase"/>
</dbReference>
<dbReference type="GO" id="GO:0032977">
    <property type="term" value="F:membrane insertase activity"/>
    <property type="evidence" value="ECO:0000318"/>
    <property type="project" value="GO_Central"/>
</dbReference>
<dbReference type="GO" id="GO:0032979">
    <property type="term" value="P:protein insertion into mitochondrial inner membrane from matrix"/>
    <property type="evidence" value="ECO:0000318"/>
    <property type="project" value="GO_Central"/>
</dbReference>
<dbReference type="CDD" id="cd20069">
    <property type="entry name" value="5TM_Oxa1-like"/>
    <property type="match status" value="1"/>
</dbReference>
<dbReference type="InterPro" id="IPR001708">
    <property type="entry name" value="YidC/ALB3/OXA1/COX18"/>
</dbReference>
<dbReference type="InterPro" id="IPR028055">
    <property type="entry name" value="YidC/Oxa/ALB_C"/>
</dbReference>
<dbReference type="NCBIfam" id="TIGR03592">
    <property type="entry name" value="yidC_oxa1_cterm"/>
    <property type="match status" value="1"/>
</dbReference>
<dbReference type="PANTHER" id="PTHR12428:SF66">
    <property type="entry name" value="MITOCHONDRIAL INNER MEMBRANE PROTEIN OXA1L"/>
    <property type="match status" value="1"/>
</dbReference>
<dbReference type="PANTHER" id="PTHR12428">
    <property type="entry name" value="OXA1"/>
    <property type="match status" value="1"/>
</dbReference>
<dbReference type="Pfam" id="PF02096">
    <property type="entry name" value="60KD_IMP"/>
    <property type="match status" value="1"/>
</dbReference>